<reference key="1">
    <citation type="journal article" date="1996" name="Nucleic Acids Res.">
        <title>Sequence analysis of 56 kb from the genome of the bacterium Mycoplasma pneumoniae comprising the dnaA region, the atp operon and a cluster of ribosomal protein genes.</title>
        <authorList>
            <person name="Hilbert H."/>
            <person name="Himmelreich R."/>
            <person name="Plagens H."/>
            <person name="Herrmann R."/>
        </authorList>
    </citation>
    <scope>NUCLEOTIDE SEQUENCE [GENOMIC DNA]</scope>
    <source>
        <strain>ATCC 29342 / M129 / Subtype 1</strain>
    </source>
</reference>
<reference key="2">
    <citation type="journal article" date="1996" name="Nucleic Acids Res.">
        <title>Complete sequence analysis of the genome of the bacterium Mycoplasma pneumoniae.</title>
        <authorList>
            <person name="Himmelreich R."/>
            <person name="Hilbert H."/>
            <person name="Plagens H."/>
            <person name="Pirkl E."/>
            <person name="Li B.-C."/>
            <person name="Herrmann R."/>
        </authorList>
    </citation>
    <scope>NUCLEOTIDE SEQUENCE [LARGE SCALE GENOMIC DNA]</scope>
    <source>
        <strain>ATCC 29342 / M129 / Subtype 1</strain>
    </source>
</reference>
<keyword id="KW-0002">3D-structure</keyword>
<keyword id="KW-1185">Reference proteome</keyword>
<keyword id="KW-0687">Ribonucleoprotein</keyword>
<keyword id="KW-0689">Ribosomal protein</keyword>
<keyword id="KW-0694">RNA-binding</keyword>
<keyword id="KW-0699">rRNA-binding</keyword>
<gene>
    <name evidence="1" type="primary">rpsQ</name>
    <name type="ordered locus">MPN_174</name>
    <name type="ORF">MP657</name>
</gene>
<feature type="chain" id="PRO_0000128470" description="Small ribosomal subunit protein uS17">
    <location>
        <begin position="1"/>
        <end position="85"/>
    </location>
</feature>
<feature type="strand" evidence="3">
    <location>
        <begin position="8"/>
        <end position="15"/>
    </location>
</feature>
<feature type="strand" evidence="3">
    <location>
        <begin position="18"/>
        <end position="28"/>
    </location>
</feature>
<feature type="turn" evidence="3">
    <location>
        <begin position="33"/>
        <end position="35"/>
    </location>
</feature>
<feature type="strand" evidence="3">
    <location>
        <begin position="41"/>
        <end position="48"/>
    </location>
</feature>
<feature type="strand" evidence="3">
    <location>
        <begin position="60"/>
        <end position="70"/>
    </location>
</feature>
<feature type="strand" evidence="3">
    <location>
        <begin position="73"/>
        <end position="80"/>
    </location>
</feature>
<accession>Q50309</accession>
<evidence type="ECO:0000255" key="1">
    <source>
        <dbReference type="HAMAP-Rule" id="MF_01345"/>
    </source>
</evidence>
<evidence type="ECO:0000305" key="2"/>
<evidence type="ECO:0007829" key="3">
    <source>
        <dbReference type="PDB" id="8P6P"/>
    </source>
</evidence>
<sequence length="85" mass="9834">MKRNQRKVLIGIVKSTKNAKTATVQVESRFKHPLYHKSVVRHKKYQAHNEGEVLAKDGDKVQIVETRPLSATKRFRIAKIIERAK</sequence>
<organism>
    <name type="scientific">Mycoplasma pneumoniae (strain ATCC 29342 / M129 / Subtype 1)</name>
    <name type="common">Mycoplasmoides pneumoniae</name>
    <dbReference type="NCBI Taxonomy" id="272634"/>
    <lineage>
        <taxon>Bacteria</taxon>
        <taxon>Bacillati</taxon>
        <taxon>Mycoplasmatota</taxon>
        <taxon>Mycoplasmoidales</taxon>
        <taxon>Mycoplasmoidaceae</taxon>
        <taxon>Mycoplasmoides</taxon>
    </lineage>
</organism>
<comment type="function">
    <text evidence="1">One of the primary rRNA binding proteins, it binds specifically to the 5'-end of 16S ribosomal RNA.</text>
</comment>
<comment type="subunit">
    <text evidence="1">Part of the 30S ribosomal subunit.</text>
</comment>
<comment type="similarity">
    <text evidence="1">Belongs to the universal ribosomal protein uS17 family.</text>
</comment>
<name>RS17_MYCPN</name>
<dbReference type="EMBL" id="U34795">
    <property type="protein sequence ID" value="AAC43707.1"/>
    <property type="molecule type" value="Genomic_DNA"/>
</dbReference>
<dbReference type="EMBL" id="U00089">
    <property type="protein sequence ID" value="AAB96305.1"/>
    <property type="molecule type" value="Genomic_DNA"/>
</dbReference>
<dbReference type="PIR" id="S62832">
    <property type="entry name" value="S62832"/>
</dbReference>
<dbReference type="RefSeq" id="NP_109862.1">
    <property type="nucleotide sequence ID" value="NC_000912.1"/>
</dbReference>
<dbReference type="RefSeq" id="WP_010874531.1">
    <property type="nucleotide sequence ID" value="NZ_OU342337.1"/>
</dbReference>
<dbReference type="PDB" id="7OOC">
    <property type="method" value="EM"/>
    <property type="resolution" value="3.70 A"/>
    <property type="chains" value="P=1-85"/>
</dbReference>
<dbReference type="PDB" id="7P6Z">
    <property type="method" value="EM"/>
    <property type="resolution" value="3.50 A"/>
    <property type="chains" value="P=1-85"/>
</dbReference>
<dbReference type="PDB" id="7PAH">
    <property type="method" value="EM"/>
    <property type="resolution" value="9.50 A"/>
    <property type="chains" value="P=1-85"/>
</dbReference>
<dbReference type="PDB" id="7PAI">
    <property type="method" value="EM"/>
    <property type="resolution" value="6.70 A"/>
    <property type="chains" value="P=1-85"/>
</dbReference>
<dbReference type="PDB" id="7PAJ">
    <property type="method" value="EM"/>
    <property type="resolution" value="7.30 A"/>
    <property type="chains" value="P=1-85"/>
</dbReference>
<dbReference type="PDB" id="7PAK">
    <property type="method" value="EM"/>
    <property type="resolution" value="5.30 A"/>
    <property type="chains" value="P=1-85"/>
</dbReference>
<dbReference type="PDB" id="7PAL">
    <property type="method" value="EM"/>
    <property type="resolution" value="4.70 A"/>
    <property type="chains" value="P=1-85"/>
</dbReference>
<dbReference type="PDB" id="7PAM">
    <property type="method" value="EM"/>
    <property type="resolution" value="6.80 A"/>
    <property type="chains" value="P=1-85"/>
</dbReference>
<dbReference type="PDB" id="7PAN">
    <property type="method" value="EM"/>
    <property type="resolution" value="9.70 A"/>
    <property type="chains" value="P=1-85"/>
</dbReference>
<dbReference type="PDB" id="7PAO">
    <property type="method" value="EM"/>
    <property type="resolution" value="7.00 A"/>
    <property type="chains" value="P=1-85"/>
</dbReference>
<dbReference type="PDB" id="7PAQ">
    <property type="method" value="EM"/>
    <property type="resolution" value="8.90 A"/>
    <property type="chains" value="P=1-85"/>
</dbReference>
<dbReference type="PDB" id="7PAR">
    <property type="method" value="EM"/>
    <property type="resolution" value="8.20 A"/>
    <property type="chains" value="P=1-85"/>
</dbReference>
<dbReference type="PDB" id="7PAS">
    <property type="method" value="EM"/>
    <property type="resolution" value="16.00 A"/>
    <property type="chains" value="P=1-85"/>
</dbReference>
<dbReference type="PDB" id="7PH9">
    <property type="method" value="EM"/>
    <property type="resolution" value="8.70 A"/>
    <property type="chains" value="P=1-85"/>
</dbReference>
<dbReference type="PDB" id="7PHA">
    <property type="method" value="EM"/>
    <property type="resolution" value="8.50 A"/>
    <property type="chains" value="P=1-85"/>
</dbReference>
<dbReference type="PDB" id="7PHB">
    <property type="method" value="EM"/>
    <property type="resolution" value="4.90 A"/>
    <property type="chains" value="P=1-85"/>
</dbReference>
<dbReference type="PDB" id="7PHC">
    <property type="method" value="EM"/>
    <property type="resolution" value="9.90 A"/>
    <property type="chains" value="P=1-85"/>
</dbReference>
<dbReference type="PDB" id="7PI8">
    <property type="method" value="EM"/>
    <property type="resolution" value="8.90 A"/>
    <property type="chains" value="P=1-85"/>
</dbReference>
<dbReference type="PDB" id="7PI9">
    <property type="method" value="EM"/>
    <property type="resolution" value="6.30 A"/>
    <property type="chains" value="P=1-85"/>
</dbReference>
<dbReference type="PDB" id="7PIA">
    <property type="method" value="EM"/>
    <property type="resolution" value="13.60 A"/>
    <property type="chains" value="P=1-85"/>
</dbReference>
<dbReference type="PDB" id="7PIB">
    <property type="method" value="EM"/>
    <property type="resolution" value="4.70 A"/>
    <property type="chains" value="P=1-85"/>
</dbReference>
<dbReference type="PDB" id="7PIC">
    <property type="method" value="EM"/>
    <property type="resolution" value="9.10 A"/>
    <property type="chains" value="P=1-85"/>
</dbReference>
<dbReference type="PDB" id="7PIO">
    <property type="method" value="EM"/>
    <property type="resolution" value="9.50 A"/>
    <property type="chains" value="P=1-85"/>
</dbReference>
<dbReference type="PDB" id="7PIP">
    <property type="method" value="EM"/>
    <property type="resolution" value="9.30 A"/>
    <property type="chains" value="P=1-85"/>
</dbReference>
<dbReference type="PDB" id="7PIQ">
    <property type="method" value="EM"/>
    <property type="resolution" value="9.70 A"/>
    <property type="chains" value="P=1-85"/>
</dbReference>
<dbReference type="PDB" id="7PIR">
    <property type="method" value="EM"/>
    <property type="resolution" value="12.10 A"/>
    <property type="chains" value="P=1-85"/>
</dbReference>
<dbReference type="PDB" id="7PIS">
    <property type="method" value="EM"/>
    <property type="resolution" value="15.00 A"/>
    <property type="chains" value="P=1-85"/>
</dbReference>
<dbReference type="PDB" id="7PIT">
    <property type="method" value="EM"/>
    <property type="resolution" value="5.70 A"/>
    <property type="chains" value="P=1-85"/>
</dbReference>
<dbReference type="PDB" id="8P6P">
    <property type="method" value="EM"/>
    <property type="resolution" value="3.20 A"/>
    <property type="chains" value="P=1-85"/>
</dbReference>
<dbReference type="PDB" id="8P7X">
    <property type="method" value="EM"/>
    <property type="resolution" value="3.03 A"/>
    <property type="chains" value="P=1-85"/>
</dbReference>
<dbReference type="PDB" id="8P7Y">
    <property type="method" value="EM"/>
    <property type="resolution" value="3.70 A"/>
    <property type="chains" value="P=1-85"/>
</dbReference>
<dbReference type="PDB" id="8P8V">
    <property type="method" value="EM"/>
    <property type="resolution" value="8.70 A"/>
    <property type="chains" value="P=1-85"/>
</dbReference>
<dbReference type="PDB" id="8P8W">
    <property type="method" value="EM"/>
    <property type="resolution" value="8.70 A"/>
    <property type="chains" value="P=1-85"/>
</dbReference>
<dbReference type="PDBsum" id="7OOC"/>
<dbReference type="PDBsum" id="7P6Z"/>
<dbReference type="PDBsum" id="7PAH"/>
<dbReference type="PDBsum" id="7PAI"/>
<dbReference type="PDBsum" id="7PAJ"/>
<dbReference type="PDBsum" id="7PAK"/>
<dbReference type="PDBsum" id="7PAL"/>
<dbReference type="PDBsum" id="7PAM"/>
<dbReference type="PDBsum" id="7PAN"/>
<dbReference type="PDBsum" id="7PAO"/>
<dbReference type="PDBsum" id="7PAQ"/>
<dbReference type="PDBsum" id="7PAR"/>
<dbReference type="PDBsum" id="7PAS"/>
<dbReference type="PDBsum" id="7PH9"/>
<dbReference type="PDBsum" id="7PHA"/>
<dbReference type="PDBsum" id="7PHB"/>
<dbReference type="PDBsum" id="7PHC"/>
<dbReference type="PDBsum" id="7PI8"/>
<dbReference type="PDBsum" id="7PI9"/>
<dbReference type="PDBsum" id="7PIA"/>
<dbReference type="PDBsum" id="7PIB"/>
<dbReference type="PDBsum" id="7PIC"/>
<dbReference type="PDBsum" id="7PIO"/>
<dbReference type="PDBsum" id="7PIP"/>
<dbReference type="PDBsum" id="7PIQ"/>
<dbReference type="PDBsum" id="7PIR"/>
<dbReference type="PDBsum" id="7PIS"/>
<dbReference type="PDBsum" id="7PIT"/>
<dbReference type="PDBsum" id="8P6P"/>
<dbReference type="PDBsum" id="8P7X"/>
<dbReference type="PDBsum" id="8P7Y"/>
<dbReference type="PDBsum" id="8P8V"/>
<dbReference type="PDBsum" id="8P8W"/>
<dbReference type="EMDB" id="EMD-13234"/>
<dbReference type="EMDB" id="EMD-13272"/>
<dbReference type="EMDB" id="EMD-13273"/>
<dbReference type="EMDB" id="EMD-13274"/>
<dbReference type="EMDB" id="EMD-13275"/>
<dbReference type="EMDB" id="EMD-13276"/>
<dbReference type="EMDB" id="EMD-13277"/>
<dbReference type="EMDB" id="EMD-13278"/>
<dbReference type="EMDB" id="EMD-13279"/>
<dbReference type="EMDB" id="EMD-13280"/>
<dbReference type="EMDB" id="EMD-13281"/>
<dbReference type="EMDB" id="EMD-13282"/>
<dbReference type="EMDB" id="EMD-13410"/>
<dbReference type="EMDB" id="EMD-13411"/>
<dbReference type="EMDB" id="EMD-13412"/>
<dbReference type="EMDB" id="EMD-13413"/>
<dbReference type="EMDB" id="EMD-13432"/>
<dbReference type="EMDB" id="EMD-13433"/>
<dbReference type="EMDB" id="EMD-13434"/>
<dbReference type="EMDB" id="EMD-13435"/>
<dbReference type="EMDB" id="EMD-13436"/>
<dbReference type="EMDB" id="EMD-13445"/>
<dbReference type="EMDB" id="EMD-13446"/>
<dbReference type="EMDB" id="EMD-13447"/>
<dbReference type="EMDB" id="EMD-13448"/>
<dbReference type="EMDB" id="EMD-13449"/>
<dbReference type="EMDB" id="EMD-13450"/>
<dbReference type="SMR" id="Q50309"/>
<dbReference type="IntAct" id="Q50309">
    <property type="interactions" value="5"/>
</dbReference>
<dbReference type="STRING" id="272634.MPN_174"/>
<dbReference type="EnsemblBacteria" id="AAB96305">
    <property type="protein sequence ID" value="AAB96305"/>
    <property type="gene ID" value="MPN_174"/>
</dbReference>
<dbReference type="KEGG" id="mpn:MPN_174"/>
<dbReference type="PATRIC" id="fig|272634.6.peg.192"/>
<dbReference type="HOGENOM" id="CLU_073626_1_0_14"/>
<dbReference type="OrthoDB" id="9811714at2"/>
<dbReference type="BioCyc" id="MPNE272634:G1GJ3-285-MONOMER"/>
<dbReference type="Proteomes" id="UP000000808">
    <property type="component" value="Chromosome"/>
</dbReference>
<dbReference type="GO" id="GO:0022627">
    <property type="term" value="C:cytosolic small ribosomal subunit"/>
    <property type="evidence" value="ECO:0007669"/>
    <property type="project" value="TreeGrafter"/>
</dbReference>
<dbReference type="GO" id="GO:0019843">
    <property type="term" value="F:rRNA binding"/>
    <property type="evidence" value="ECO:0007669"/>
    <property type="project" value="UniProtKB-UniRule"/>
</dbReference>
<dbReference type="GO" id="GO:0003735">
    <property type="term" value="F:structural constituent of ribosome"/>
    <property type="evidence" value="ECO:0007669"/>
    <property type="project" value="InterPro"/>
</dbReference>
<dbReference type="GO" id="GO:0006412">
    <property type="term" value="P:translation"/>
    <property type="evidence" value="ECO:0007669"/>
    <property type="project" value="UniProtKB-UniRule"/>
</dbReference>
<dbReference type="CDD" id="cd00364">
    <property type="entry name" value="Ribosomal_uS17"/>
    <property type="match status" value="1"/>
</dbReference>
<dbReference type="Gene3D" id="2.40.50.140">
    <property type="entry name" value="Nucleic acid-binding proteins"/>
    <property type="match status" value="1"/>
</dbReference>
<dbReference type="HAMAP" id="MF_01345_B">
    <property type="entry name" value="Ribosomal_uS17_B"/>
    <property type="match status" value="1"/>
</dbReference>
<dbReference type="InterPro" id="IPR012340">
    <property type="entry name" value="NA-bd_OB-fold"/>
</dbReference>
<dbReference type="InterPro" id="IPR000266">
    <property type="entry name" value="Ribosomal_uS17"/>
</dbReference>
<dbReference type="InterPro" id="IPR019984">
    <property type="entry name" value="Ribosomal_uS17_bact/chlr"/>
</dbReference>
<dbReference type="InterPro" id="IPR019979">
    <property type="entry name" value="Ribosomal_uS17_CS"/>
</dbReference>
<dbReference type="NCBIfam" id="NF004123">
    <property type="entry name" value="PRK05610.1"/>
    <property type="match status" value="1"/>
</dbReference>
<dbReference type="NCBIfam" id="TIGR03635">
    <property type="entry name" value="uS17_bact"/>
    <property type="match status" value="1"/>
</dbReference>
<dbReference type="PANTHER" id="PTHR10744">
    <property type="entry name" value="40S RIBOSOMAL PROTEIN S11 FAMILY MEMBER"/>
    <property type="match status" value="1"/>
</dbReference>
<dbReference type="PANTHER" id="PTHR10744:SF1">
    <property type="entry name" value="SMALL RIBOSOMAL SUBUNIT PROTEIN US17M"/>
    <property type="match status" value="1"/>
</dbReference>
<dbReference type="Pfam" id="PF00366">
    <property type="entry name" value="Ribosomal_S17"/>
    <property type="match status" value="1"/>
</dbReference>
<dbReference type="PRINTS" id="PR00973">
    <property type="entry name" value="RIBOSOMALS17"/>
</dbReference>
<dbReference type="SUPFAM" id="SSF50249">
    <property type="entry name" value="Nucleic acid-binding proteins"/>
    <property type="match status" value="1"/>
</dbReference>
<dbReference type="PROSITE" id="PS00056">
    <property type="entry name" value="RIBOSOMAL_S17"/>
    <property type="match status" value="1"/>
</dbReference>
<protein>
    <recommendedName>
        <fullName evidence="1">Small ribosomal subunit protein uS17</fullName>
    </recommendedName>
    <alternativeName>
        <fullName evidence="2">30S ribosomal protein S17</fullName>
    </alternativeName>
</protein>
<proteinExistence type="evidence at protein level"/>